<keyword id="KW-0007">Acetylation</keyword>
<keyword id="KW-0963">Cytoplasm</keyword>
<keyword id="KW-1017">Isopeptide bond</keyword>
<keyword id="KW-0944">Nitration</keyword>
<keyword id="KW-0597">Phosphoprotein</keyword>
<keyword id="KW-1185">Reference proteome</keyword>
<keyword id="KW-0832">Ubl conjugation</keyword>
<dbReference type="EMBL" id="AY555574">
    <property type="protein sequence ID" value="AAS72303.1"/>
    <property type="molecule type" value="mRNA"/>
</dbReference>
<dbReference type="RefSeq" id="NP_001075637.1">
    <property type="nucleotide sequence ID" value="NM_001082168.1"/>
</dbReference>
<dbReference type="SMR" id="Q6Q6X0"/>
<dbReference type="FunCoup" id="Q6Q6X0">
    <property type="interactions" value="1315"/>
</dbReference>
<dbReference type="STRING" id="9986.ENSOCUP00000009032"/>
<dbReference type="PaxDb" id="9986-ENSOCUP00000009032"/>
<dbReference type="GeneID" id="100008930"/>
<dbReference type="KEGG" id="ocu:100008930"/>
<dbReference type="CTD" id="10971"/>
<dbReference type="eggNOG" id="KOG0841">
    <property type="taxonomic scope" value="Eukaryota"/>
</dbReference>
<dbReference type="InParanoid" id="Q6Q6X0"/>
<dbReference type="OrthoDB" id="10260625at2759"/>
<dbReference type="Proteomes" id="UP000001811">
    <property type="component" value="Unplaced"/>
</dbReference>
<dbReference type="GO" id="GO:0005737">
    <property type="term" value="C:cytoplasm"/>
    <property type="evidence" value="ECO:0007669"/>
    <property type="project" value="UniProtKB-SubCell"/>
</dbReference>
<dbReference type="CDD" id="cd10023">
    <property type="entry name" value="14-3-3_theta"/>
    <property type="match status" value="1"/>
</dbReference>
<dbReference type="FunFam" id="1.20.190.20:FF:000001">
    <property type="entry name" value="14-3-3 gamma 1"/>
    <property type="match status" value="1"/>
</dbReference>
<dbReference type="Gene3D" id="1.20.190.20">
    <property type="entry name" value="14-3-3 domain"/>
    <property type="match status" value="1"/>
</dbReference>
<dbReference type="InterPro" id="IPR000308">
    <property type="entry name" value="14-3-3"/>
</dbReference>
<dbReference type="InterPro" id="IPR023409">
    <property type="entry name" value="14-3-3_CS"/>
</dbReference>
<dbReference type="InterPro" id="IPR036815">
    <property type="entry name" value="14-3-3_dom_sf"/>
</dbReference>
<dbReference type="InterPro" id="IPR023410">
    <property type="entry name" value="14-3-3_domain"/>
</dbReference>
<dbReference type="InterPro" id="IPR042584">
    <property type="entry name" value="14-3-3_theta"/>
</dbReference>
<dbReference type="PANTHER" id="PTHR18860">
    <property type="entry name" value="14-3-3 PROTEIN"/>
    <property type="match status" value="1"/>
</dbReference>
<dbReference type="Pfam" id="PF00244">
    <property type="entry name" value="14-3-3"/>
    <property type="match status" value="1"/>
</dbReference>
<dbReference type="PIRSF" id="PIRSF000868">
    <property type="entry name" value="14-3-3"/>
    <property type="match status" value="1"/>
</dbReference>
<dbReference type="PRINTS" id="PR00305">
    <property type="entry name" value="1433ZETA"/>
</dbReference>
<dbReference type="SMART" id="SM00101">
    <property type="entry name" value="14_3_3"/>
    <property type="match status" value="1"/>
</dbReference>
<dbReference type="SUPFAM" id="SSF48445">
    <property type="entry name" value="14-3-3 protein"/>
    <property type="match status" value="1"/>
</dbReference>
<dbReference type="PROSITE" id="PS00796">
    <property type="entry name" value="1433_1"/>
    <property type="match status" value="1"/>
</dbReference>
<dbReference type="PROSITE" id="PS00797">
    <property type="entry name" value="1433_2"/>
    <property type="match status" value="1"/>
</dbReference>
<gene>
    <name type="primary">YWHAQ</name>
</gene>
<organism>
    <name type="scientific">Oryctolagus cuniculus</name>
    <name type="common">Rabbit</name>
    <dbReference type="NCBI Taxonomy" id="9986"/>
    <lineage>
        <taxon>Eukaryota</taxon>
        <taxon>Metazoa</taxon>
        <taxon>Chordata</taxon>
        <taxon>Craniata</taxon>
        <taxon>Vertebrata</taxon>
        <taxon>Euteleostomi</taxon>
        <taxon>Mammalia</taxon>
        <taxon>Eutheria</taxon>
        <taxon>Euarchontoglires</taxon>
        <taxon>Glires</taxon>
        <taxon>Lagomorpha</taxon>
        <taxon>Leporidae</taxon>
        <taxon>Oryctolagus</taxon>
    </lineage>
</organism>
<accession>Q6Q6X0</accession>
<protein>
    <recommendedName>
        <fullName>14-3-3 protein theta</fullName>
    </recommendedName>
    <alternativeName>
        <fullName>14-3-3 protein tau</fullName>
    </alternativeName>
</protein>
<sequence>MEKTELIQKAKLAEQAERYDDMATCMKAVTEQGAELSNEERNLLSVAYKNVVGGRRSAWRVISSIEQKTDTSDKKLQLIKDYREKVESELRSICTTVLELLDKYLIANATNPESKVFYLKMKGDYFRYLAEVACGDDRKQTIENSQGAYQEAFDISKKEMQPTHPIRLGLALNFSVFYYEILNNPELACTLAKTAFDEAIAELDTLNEDSYKDSTLIMQLLRDNLTLWTSDSAGEECDAAEGAEN</sequence>
<reference key="1">
    <citation type="submission" date="2004-02" db="EMBL/GenBank/DDBJ databases">
        <authorList>
            <person name="Qian Z."/>
            <person name="Barmack N.H."/>
        </authorList>
    </citation>
    <scope>NUCLEOTIDE SEQUENCE [MRNA]</scope>
</reference>
<feature type="chain" id="PRO_0000058639" description="14-3-3 protein theta">
    <location>
        <begin position="1"/>
        <end position="245"/>
    </location>
</feature>
<feature type="site" description="Interaction with phosphoserine on interacting protein" evidence="1">
    <location>
        <position position="56"/>
    </location>
</feature>
<feature type="site" description="Interaction with phosphoserine on interacting protein" evidence="1">
    <location>
        <position position="127"/>
    </location>
</feature>
<feature type="modified residue" description="N-acetylmethionine" evidence="2">
    <location>
        <position position="1"/>
    </location>
</feature>
<feature type="modified residue" description="N6-acetyllysine" evidence="2">
    <location>
        <position position="3"/>
    </location>
</feature>
<feature type="modified residue" description="N6-acetyllysine; alternate" evidence="2">
    <location>
        <position position="49"/>
    </location>
</feature>
<feature type="modified residue" description="N6-acetyllysine" evidence="2">
    <location>
        <position position="68"/>
    </location>
</feature>
<feature type="modified residue" description="3'-nitrotyrosine" evidence="4">
    <location>
        <position position="82"/>
    </location>
</feature>
<feature type="modified residue" description="Phosphoserine" evidence="3">
    <location>
        <position position="92"/>
    </location>
</feature>
<feature type="modified residue" description="3'-nitrotyrosine" evidence="4">
    <location>
        <position position="104"/>
    </location>
</feature>
<feature type="modified residue" description="N6-acetyllysine" evidence="2">
    <location>
        <position position="115"/>
    </location>
</feature>
<feature type="modified residue" description="Phosphoserine; by CK1" evidence="2 5">
    <location>
        <position position="232"/>
    </location>
</feature>
<feature type="cross-link" description="Glycyl lysine isopeptide (Lys-Gly) (interchain with G-Cter in SUMO2); alternate" evidence="2">
    <location>
        <position position="49"/>
    </location>
</feature>
<name>1433T_RABIT</name>
<evidence type="ECO:0000250" key="1"/>
<evidence type="ECO:0000250" key="2">
    <source>
        <dbReference type="UniProtKB" id="P27348"/>
    </source>
</evidence>
<evidence type="ECO:0000250" key="3">
    <source>
        <dbReference type="UniProtKB" id="P68254"/>
    </source>
</evidence>
<evidence type="ECO:0000250" key="4">
    <source>
        <dbReference type="UniProtKB" id="Q9CQV8"/>
    </source>
</evidence>
<evidence type="ECO:0000305" key="5"/>
<comment type="function">
    <text evidence="1">Adapter protein implicated in the regulation of a large spectrum of both general and specialized signaling pathways. Binds to a large number of partners, usually by recognition of a phosphoserine or phosphothreonine motif. Binding generally results in the modulation of the activity of the binding partner. Negatively regulates the kinase activity of PDPK1 (By similarity).</text>
</comment>
<comment type="subunit">
    <text evidence="2 3">Homodimer. Interacts with CDK16 (By similarity). Interacts with RGS7 (phosphorylated form). Interacts with SSH1. Interacts with CDKN1B ('Thr-198' phosphorylated form); the interaction translocates CDKN1B to the cytoplasm. Interacts with GAB2. Interacts with the 'Ser-241' phosphorylated form of PDPK1. Interacts with the 'Thr-369' phosphorylated form of DAPK2 (By similarity). Interacts with PI4KB, TBC1D22A and TBC1D22B (By similarity). Interacts with SLITRK1 (By similarity). Interacts with RIPOR2 (By similarity). Interacts with INAVA; the interaction increases upon PRR (pattern recognition receptor) stimulation and is required for cellular signaling pathway activation and cytokine secretion (By similarity). Interacts with MARK2, MARK3 and MARK4 (By similarity). Interacts with MEFV (By similarity).</text>
</comment>
<comment type="subcellular location">
    <subcellularLocation>
        <location evidence="1">Cytoplasm</location>
    </subcellularLocation>
</comment>
<comment type="similarity">
    <text evidence="5">Belongs to the 14-3-3 family.</text>
</comment>
<proteinExistence type="evidence at transcript level"/>